<sequence length="363" mass="39879">MGFKCGIVGLPNVGKSTLFNALTKAGIEAANYPFCTIEPNTGVVPMPDPRLDALAEIVKPERVLPTTMEFVDIAGLVAGASKGEGLGNKFLANIRETDAIGHVVRCFENDDIVHVAGQINPAEDIDTINTELALADLDSCERAIQRLQKRAKGGDKDAKFELSIMEKILPVLENAGMIRSIDLDKDELQAIKGYNFLTLKPTMYIANVNEDGFENNPYLDRVREIAEKEGAVVVPVCAAIESEIAELDDDEKIEFLQDLGIEEPGLNRVIRAGYKLLNLQTYFTAGVKEVRAWTIPIGATAPKSAAVIHTDFEKGFIRAEVIAYDDFIQYKGEAGAKEAGKWRLEGKDYIVQDGDVMHFRFNV</sequence>
<accession>Q9CP90</accession>
<protein>
    <recommendedName>
        <fullName evidence="2">Ribosome-binding ATPase YchF</fullName>
    </recommendedName>
</protein>
<evidence type="ECO:0000250" key="1"/>
<evidence type="ECO:0000255" key="2">
    <source>
        <dbReference type="HAMAP-Rule" id="MF_00944"/>
    </source>
</evidence>
<evidence type="ECO:0000255" key="3">
    <source>
        <dbReference type="PROSITE-ProRule" id="PRU01228"/>
    </source>
</evidence>
<comment type="function">
    <text evidence="2">ATPase that binds to both the 70S ribosome and the 50S ribosomal subunit in a nucleotide-independent manner.</text>
</comment>
<comment type="cofactor">
    <cofactor evidence="1">
        <name>Mg(2+)</name>
        <dbReference type="ChEBI" id="CHEBI:18420"/>
    </cofactor>
</comment>
<comment type="similarity">
    <text evidence="2">Belongs to the TRAFAC class OBG-HflX-like GTPase superfamily. OBG GTPase family. YchF/OLA1 subfamily.</text>
</comment>
<feature type="initiator methionine" description="Removed" evidence="1">
    <location>
        <position position="1"/>
    </location>
</feature>
<feature type="chain" id="PRO_0000201679" description="Ribosome-binding ATPase YchF">
    <location>
        <begin position="2"/>
        <end position="363"/>
    </location>
</feature>
<feature type="domain" description="OBG-type G">
    <location>
        <begin position="3"/>
        <end position="256"/>
    </location>
</feature>
<feature type="domain" description="TGS" evidence="3">
    <location>
        <begin position="278"/>
        <end position="361"/>
    </location>
</feature>
<feature type="binding site" evidence="2">
    <location>
        <begin position="12"/>
        <end position="17"/>
    </location>
    <ligand>
        <name>ATP</name>
        <dbReference type="ChEBI" id="CHEBI:30616"/>
    </ligand>
</feature>
<feature type="binding site" evidence="1">
    <location>
        <position position="16"/>
    </location>
    <ligand>
        <name>Mg(2+)</name>
        <dbReference type="ChEBI" id="CHEBI:18420"/>
    </ligand>
</feature>
<feature type="binding site" evidence="1">
    <location>
        <position position="36"/>
    </location>
    <ligand>
        <name>Mg(2+)</name>
        <dbReference type="ChEBI" id="CHEBI:18420"/>
    </ligand>
</feature>
<name>YCHF_PASMU</name>
<proteinExistence type="inferred from homology"/>
<organism>
    <name type="scientific">Pasteurella multocida (strain Pm70)</name>
    <dbReference type="NCBI Taxonomy" id="272843"/>
    <lineage>
        <taxon>Bacteria</taxon>
        <taxon>Pseudomonadati</taxon>
        <taxon>Pseudomonadota</taxon>
        <taxon>Gammaproteobacteria</taxon>
        <taxon>Pasteurellales</taxon>
        <taxon>Pasteurellaceae</taxon>
        <taxon>Pasteurella</taxon>
    </lineage>
</organism>
<reference key="1">
    <citation type="journal article" date="2001" name="Proc. Natl. Acad. Sci. U.S.A.">
        <title>Complete genomic sequence of Pasteurella multocida Pm70.</title>
        <authorList>
            <person name="May B.J."/>
            <person name="Zhang Q."/>
            <person name="Li L.L."/>
            <person name="Paustian M.L."/>
            <person name="Whittam T.S."/>
            <person name="Kapur V."/>
        </authorList>
    </citation>
    <scope>NUCLEOTIDE SEQUENCE [LARGE SCALE GENOMIC DNA]</scope>
    <source>
        <strain>Pm70</strain>
    </source>
</reference>
<gene>
    <name evidence="2" type="primary">ychF</name>
    <name type="synonym">engD</name>
    <name type="ordered locus">PM0163</name>
</gene>
<keyword id="KW-0067">ATP-binding</keyword>
<keyword id="KW-0460">Magnesium</keyword>
<keyword id="KW-0479">Metal-binding</keyword>
<keyword id="KW-0547">Nucleotide-binding</keyword>
<keyword id="KW-1185">Reference proteome</keyword>
<dbReference type="EMBL" id="AE004439">
    <property type="protein sequence ID" value="AAK02247.1"/>
    <property type="molecule type" value="Genomic_DNA"/>
</dbReference>
<dbReference type="RefSeq" id="WP_005720428.1">
    <property type="nucleotide sequence ID" value="NC_002663.1"/>
</dbReference>
<dbReference type="SMR" id="Q9CP90"/>
<dbReference type="STRING" id="272843.PM0163"/>
<dbReference type="EnsemblBacteria" id="AAK02247">
    <property type="protein sequence ID" value="AAK02247"/>
    <property type="gene ID" value="PM0163"/>
</dbReference>
<dbReference type="KEGG" id="pmu:PM0163"/>
<dbReference type="HOGENOM" id="CLU_018395_0_1_6"/>
<dbReference type="OrthoDB" id="9810373at2"/>
<dbReference type="Proteomes" id="UP000000809">
    <property type="component" value="Chromosome"/>
</dbReference>
<dbReference type="GO" id="GO:0005737">
    <property type="term" value="C:cytoplasm"/>
    <property type="evidence" value="ECO:0007669"/>
    <property type="project" value="TreeGrafter"/>
</dbReference>
<dbReference type="GO" id="GO:0005524">
    <property type="term" value="F:ATP binding"/>
    <property type="evidence" value="ECO:0007669"/>
    <property type="project" value="UniProtKB-UniRule"/>
</dbReference>
<dbReference type="GO" id="GO:0016887">
    <property type="term" value="F:ATP hydrolysis activity"/>
    <property type="evidence" value="ECO:0007669"/>
    <property type="project" value="UniProtKB-UniRule"/>
</dbReference>
<dbReference type="GO" id="GO:0005525">
    <property type="term" value="F:GTP binding"/>
    <property type="evidence" value="ECO:0007669"/>
    <property type="project" value="InterPro"/>
</dbReference>
<dbReference type="GO" id="GO:0046872">
    <property type="term" value="F:metal ion binding"/>
    <property type="evidence" value="ECO:0007669"/>
    <property type="project" value="UniProtKB-KW"/>
</dbReference>
<dbReference type="GO" id="GO:0043023">
    <property type="term" value="F:ribosomal large subunit binding"/>
    <property type="evidence" value="ECO:0007669"/>
    <property type="project" value="UniProtKB-UniRule"/>
</dbReference>
<dbReference type="CDD" id="cd04867">
    <property type="entry name" value="TGS_YchF_OLA1"/>
    <property type="match status" value="1"/>
</dbReference>
<dbReference type="CDD" id="cd01900">
    <property type="entry name" value="YchF"/>
    <property type="match status" value="1"/>
</dbReference>
<dbReference type="FunFam" id="1.10.150.300:FF:000002">
    <property type="entry name" value="Ribosome-binding ATPase YchF"/>
    <property type="match status" value="1"/>
</dbReference>
<dbReference type="FunFam" id="3.10.20.30:FF:000001">
    <property type="entry name" value="Ribosome-binding ATPase YchF"/>
    <property type="match status" value="1"/>
</dbReference>
<dbReference type="Gene3D" id="3.10.20.30">
    <property type="match status" value="1"/>
</dbReference>
<dbReference type="Gene3D" id="3.40.50.300">
    <property type="entry name" value="P-loop containing nucleotide triphosphate hydrolases"/>
    <property type="match status" value="1"/>
</dbReference>
<dbReference type="Gene3D" id="1.10.150.300">
    <property type="entry name" value="TGS-like domain"/>
    <property type="match status" value="1"/>
</dbReference>
<dbReference type="HAMAP" id="MF_00944">
    <property type="entry name" value="YchF_OLA1_ATPase"/>
    <property type="match status" value="1"/>
</dbReference>
<dbReference type="InterPro" id="IPR004396">
    <property type="entry name" value="ATPase_YchF/OLA1"/>
</dbReference>
<dbReference type="InterPro" id="IPR012675">
    <property type="entry name" value="Beta-grasp_dom_sf"/>
</dbReference>
<dbReference type="InterPro" id="IPR031167">
    <property type="entry name" value="G_OBG"/>
</dbReference>
<dbReference type="InterPro" id="IPR006073">
    <property type="entry name" value="GTP-bd"/>
</dbReference>
<dbReference type="InterPro" id="IPR027417">
    <property type="entry name" value="P-loop_NTPase"/>
</dbReference>
<dbReference type="InterPro" id="IPR004095">
    <property type="entry name" value="TGS"/>
</dbReference>
<dbReference type="InterPro" id="IPR012676">
    <property type="entry name" value="TGS-like"/>
</dbReference>
<dbReference type="InterPro" id="IPR023192">
    <property type="entry name" value="TGS-like_dom_sf"/>
</dbReference>
<dbReference type="InterPro" id="IPR013029">
    <property type="entry name" value="YchF_C"/>
</dbReference>
<dbReference type="InterPro" id="IPR041706">
    <property type="entry name" value="YchF_N"/>
</dbReference>
<dbReference type="NCBIfam" id="TIGR00092">
    <property type="entry name" value="redox-regulated ATPase YchF"/>
    <property type="match status" value="1"/>
</dbReference>
<dbReference type="PANTHER" id="PTHR23305">
    <property type="entry name" value="OBG GTPASE FAMILY"/>
    <property type="match status" value="1"/>
</dbReference>
<dbReference type="PANTHER" id="PTHR23305:SF18">
    <property type="entry name" value="OBG-TYPE G DOMAIN-CONTAINING PROTEIN"/>
    <property type="match status" value="1"/>
</dbReference>
<dbReference type="Pfam" id="PF01926">
    <property type="entry name" value="MMR_HSR1"/>
    <property type="match status" value="1"/>
</dbReference>
<dbReference type="Pfam" id="PF06071">
    <property type="entry name" value="YchF-GTPase_C"/>
    <property type="match status" value="1"/>
</dbReference>
<dbReference type="PIRSF" id="PIRSF006641">
    <property type="entry name" value="CHP00092"/>
    <property type="match status" value="1"/>
</dbReference>
<dbReference type="PRINTS" id="PR00326">
    <property type="entry name" value="GTP1OBG"/>
</dbReference>
<dbReference type="SUPFAM" id="SSF52540">
    <property type="entry name" value="P-loop containing nucleoside triphosphate hydrolases"/>
    <property type="match status" value="1"/>
</dbReference>
<dbReference type="SUPFAM" id="SSF81271">
    <property type="entry name" value="TGS-like"/>
    <property type="match status" value="1"/>
</dbReference>
<dbReference type="PROSITE" id="PS51710">
    <property type="entry name" value="G_OBG"/>
    <property type="match status" value="1"/>
</dbReference>
<dbReference type="PROSITE" id="PS51880">
    <property type="entry name" value="TGS"/>
    <property type="match status" value="1"/>
</dbReference>